<name>SMP01_NAUMA</name>
<reference key="1">
    <citation type="journal article" date="2009" name="ChemBioChem">
        <title>Evolution of nacre: biochemistry and 'shellomics' of the shell organic matrix of the cephalopod Nautilus macromphalus.</title>
        <authorList>
            <person name="Marie B."/>
            <person name="Marin F."/>
            <person name="Marie A."/>
            <person name="Bedouet L."/>
            <person name="Dubost L."/>
            <person name="Alcaraz G."/>
            <person name="Milet C."/>
            <person name="Luquet G."/>
        </authorList>
    </citation>
    <scope>PROTEIN SEQUENCE</scope>
    <scope>TISSUE SPECIFICITY</scope>
    <source>
        <tissue>Shell</tissue>
    </source>
</reference>
<feature type="chain" id="PRO_0000371482" description="Uncharacterized protein SMPP1">
    <location>
        <begin position="1" status="less than"/>
        <end position="14" status="greater than"/>
    </location>
</feature>
<feature type="unsure residue" description="L -&gt; I" evidence="1">
    <location>
        <position position="6"/>
    </location>
</feature>
<feature type="unsure residue" description="L -&gt; I" evidence="1">
    <location>
        <position position="9"/>
    </location>
</feature>
<feature type="non-terminal residue" evidence="2">
    <location>
        <position position="1"/>
    </location>
</feature>
<feature type="non-terminal residue" evidence="2">
    <location>
        <position position="14"/>
    </location>
</feature>
<proteinExistence type="evidence at protein level"/>
<accession>P85390</accession>
<evidence type="ECO:0000269" key="1">
    <source>
    </source>
</evidence>
<evidence type="ECO:0000303" key="2">
    <source>
    </source>
</evidence>
<organism>
    <name type="scientific">Nautilus macromphalus</name>
    <name type="common">Bellybutton nautilus</name>
    <dbReference type="NCBI Taxonomy" id="34576"/>
    <lineage>
        <taxon>Eukaryota</taxon>
        <taxon>Metazoa</taxon>
        <taxon>Spiralia</taxon>
        <taxon>Lophotrochozoa</taxon>
        <taxon>Mollusca</taxon>
        <taxon>Cephalopoda</taxon>
        <taxon>Nautiloidea</taxon>
        <taxon>Nautilida</taxon>
        <taxon>Nautilidae</taxon>
        <taxon>Nautilus</taxon>
    </lineage>
</organism>
<sequence length="14" mass="1453">SDCACLHALGHVAR</sequence>
<comment type="tissue specificity">
    <text evidence="1">Nacreous layer of shell.</text>
</comment>
<keyword id="KW-0903">Direct protein sequencing</keyword>
<protein>
    <recommendedName>
        <fullName evidence="2">Uncharacterized protein SMPP1</fullName>
    </recommendedName>
</protein>